<keyword id="KW-0002">3D-structure</keyword>
<keyword id="KW-0025">Alternative splicing</keyword>
<keyword id="KW-0968">Cytoplasmic vesicle</keyword>
<keyword id="KW-0254">Endocytosis</keyword>
<keyword id="KW-0255">Endonuclease</keyword>
<keyword id="KW-0375">Hydrogen ion transport</keyword>
<keyword id="KW-0378">Hydrolase</keyword>
<keyword id="KW-0406">Ion transport</keyword>
<keyword id="KW-0472">Membrane</keyword>
<keyword id="KW-0540">Nuclease</keyword>
<keyword id="KW-1267">Proteomics identification</keyword>
<keyword id="KW-1185">Reference proteome</keyword>
<keyword id="KW-0812">Transmembrane</keyword>
<keyword id="KW-1133">Transmembrane helix</keyword>
<keyword id="KW-0813">Transport</keyword>
<sequence>MGWLRPGPRPLCPPARASWAFSHRFPSPLAPRRSPTPFFMASLLCCGPKLAACGIVLSAWGVIMLIMLGIFFNVHSAVLIEDVPFTEKDFENGPQNIYNLYEQVSYNCFIAAGLYLLLGGFSFCQVRLNKRKEYMVR</sequence>
<name>RNK_HUMAN</name>
<feature type="chain" id="PRO_0000344221" description="Ribonuclease kappa">
    <location>
        <begin position="1"/>
        <end position="137"/>
    </location>
</feature>
<feature type="transmembrane region" description="Helical" evidence="2">
    <location>
        <begin position="52"/>
        <end position="72"/>
    </location>
</feature>
<feature type="transmembrane region" description="Helical" evidence="2">
    <location>
        <begin position="104"/>
        <end position="124"/>
    </location>
</feature>
<feature type="splice variant" id="VSP_046496" description="In isoform 2." evidence="7">
    <original>MGWLRPGPRPLCPPARASWAFSHRFPSPLAPRRSPTPFFMASLLCCGPKLAACGIVLSAWGVIML</original>
    <variation>MVEAGATPPLPPCEGILGFLPPLSEPACTSAIPDSLLYGVAPVLWAEAGRLRHRPQRLGSDH</variation>
    <location>
        <begin position="1"/>
        <end position="65"/>
    </location>
</feature>
<feature type="sequence conflict" description="In Ref. 4; AAH62705." evidence="9" ref="4">
    <original>PS</original>
    <variation>GG</variation>
    <location>
        <begin position="26"/>
        <end position="27"/>
    </location>
</feature>
<feature type="helix" evidence="14">
    <location>
        <begin position="50"/>
        <end position="73"/>
    </location>
</feature>
<feature type="helix" evidence="14">
    <location>
        <begin position="80"/>
        <end position="82"/>
    </location>
</feature>
<feature type="strand" evidence="14">
    <location>
        <begin position="89"/>
        <end position="93"/>
    </location>
</feature>
<feature type="helix" evidence="14">
    <location>
        <begin position="95"/>
        <end position="127"/>
    </location>
</feature>
<evidence type="ECO:0000250" key="1">
    <source>
        <dbReference type="UniProtKB" id="Q3ZC23"/>
    </source>
</evidence>
<evidence type="ECO:0000255" key="2"/>
<evidence type="ECO:0000269" key="3">
    <source>
    </source>
</evidence>
<evidence type="ECO:0000269" key="4">
    <source>
    </source>
</evidence>
<evidence type="ECO:0000269" key="5">
    <source>
    </source>
</evidence>
<evidence type="ECO:0000269" key="6">
    <source>
    </source>
</evidence>
<evidence type="ECO:0000303" key="7">
    <source>
    </source>
</evidence>
<evidence type="ECO:0000303" key="8">
    <source>
    </source>
</evidence>
<evidence type="ECO:0000305" key="9"/>
<evidence type="ECO:0007744" key="10">
    <source>
        <dbReference type="PDB" id="6WLW"/>
    </source>
</evidence>
<evidence type="ECO:0007744" key="11">
    <source>
        <dbReference type="PDB" id="6WM2"/>
    </source>
</evidence>
<evidence type="ECO:0007744" key="12">
    <source>
        <dbReference type="PDB" id="6WM3"/>
    </source>
</evidence>
<evidence type="ECO:0007744" key="13">
    <source>
        <dbReference type="PDB" id="6WM4"/>
    </source>
</evidence>
<evidence type="ECO:0007829" key="14">
    <source>
        <dbReference type="PDB" id="6WLW"/>
    </source>
</evidence>
<protein>
    <recommendedName>
        <fullName>Ribonuclease kappa</fullName>
        <shortName>RNase K</shortName>
        <shortName>RNase kappa</shortName>
        <ecNumber evidence="3">3.1.-.-</ecNumber>
    </recommendedName>
    <alternativeName>
        <fullName evidence="8">V-type proton ATPase subunit f</fullName>
        <shortName evidence="8">V-ATPase subunit f</shortName>
    </alternativeName>
</protein>
<organism>
    <name type="scientific">Homo sapiens</name>
    <name type="common">Human</name>
    <dbReference type="NCBI Taxonomy" id="9606"/>
    <lineage>
        <taxon>Eukaryota</taxon>
        <taxon>Metazoa</taxon>
        <taxon>Chordata</taxon>
        <taxon>Craniata</taxon>
        <taxon>Vertebrata</taxon>
        <taxon>Euteleostomi</taxon>
        <taxon>Mammalia</taxon>
        <taxon>Eutheria</taxon>
        <taxon>Euarchontoglires</taxon>
        <taxon>Primates</taxon>
        <taxon>Haplorrhini</taxon>
        <taxon>Catarrhini</taxon>
        <taxon>Hominidae</taxon>
        <taxon>Homo</taxon>
    </lineage>
</organism>
<comment type="function">
    <text evidence="3 5">Endoribonuclease which preferentially cleaves ApU and ApG phosphodiester bonds. Hydrolyzes UpU bonds at a lower rate (PubMed:17881363). Regulates the activity of vacuolar (H+)-ATPase (V-ATPase) which is responsible for acidifying and maintaining the pH of intracellular compartments (PubMed:26212330). Required at an early stage of receptor-mediated endocytosis (PubMed:26212330).</text>
</comment>
<comment type="function">
    <text evidence="4 5">(Microbial infection) Required at an early stage of both clathrin-mediated and clathrin-independent endocytic uptake of a diverse set of viruses, including dengue, West Nile, Sindbis, Rift Valley Fever, influenza, and human rhinoviruses (PubMed:26056282, PubMed:26212330).</text>
</comment>
<comment type="subunit">
    <text evidence="5 6">Interacts with the proton translocation complex V0 of the V-ATPase (PubMed:33065002). Interacts with ATP6AP1 (PubMed:26212330).</text>
</comment>
<comment type="interaction">
    <interactant intactId="EBI-18397230">
        <id>Q6P5S7</id>
    </interactant>
    <interactant intactId="EBI-11724186">
        <id>Q9H2C2</id>
        <label>ARV1</label>
    </interactant>
    <organismsDiffer>false</organismsDiffer>
    <experiments>3</experiments>
</comment>
<comment type="interaction">
    <interactant intactId="EBI-18397230">
        <id>Q6P5S7</id>
    </interactant>
    <interactant intactId="EBI-12069500">
        <id>Q9HD20-3</id>
        <label>ATP13A1</label>
    </interactant>
    <organismsDiffer>false</organismsDiffer>
    <experiments>3</experiments>
</comment>
<comment type="interaction">
    <interactant intactId="EBI-18397230">
        <id>Q6P5S7</id>
    </interactant>
    <interactant intactId="EBI-749464">
        <id>Q12983</id>
        <label>BNIP3</label>
    </interactant>
    <organismsDiffer>false</organismsDiffer>
    <experiments>3</experiments>
</comment>
<comment type="interaction">
    <interactant intactId="EBI-18397230">
        <id>Q6P5S7</id>
    </interactant>
    <interactant intactId="EBI-3385283">
        <id>Q9Y3D6</id>
        <label>FIS1</label>
    </interactant>
    <organismsDiffer>false</organismsDiffer>
    <experiments>3</experiments>
</comment>
<comment type="interaction">
    <interactant intactId="EBI-18397230">
        <id>Q6P5S7</id>
    </interactant>
    <interactant intactId="EBI-713304">
        <id>Q9H0Q3</id>
        <label>FXYD6</label>
    </interactant>
    <organismsDiffer>false</organismsDiffer>
    <experiments>3</experiments>
</comment>
<comment type="interaction">
    <interactant intactId="EBI-18397230">
        <id>Q6P5S7</id>
    </interactant>
    <interactant intactId="EBI-6166686">
        <id>Q96F15</id>
        <label>GIMAP5</label>
    </interactant>
    <organismsDiffer>false</organismsDiffer>
    <experiments>3</experiments>
</comment>
<comment type="interaction">
    <interactant intactId="EBI-18397230">
        <id>Q6P5S7</id>
    </interactant>
    <interactant intactId="EBI-712096">
        <id>P30519</id>
        <label>HMOX2</label>
    </interactant>
    <organismsDiffer>false</organismsDiffer>
    <experiments>3</experiments>
</comment>
<comment type="interaction">
    <interactant intactId="EBI-18397230">
        <id>Q6P5S7</id>
    </interactant>
    <interactant intactId="EBI-718707">
        <id>O75427</id>
        <label>LRCH4</label>
    </interactant>
    <organismsDiffer>false</organismsDiffer>
    <experiments>3</experiments>
</comment>
<comment type="interaction">
    <interactant intactId="EBI-18397230">
        <id>Q6P5S7</id>
    </interactant>
    <interactant intactId="EBI-10317425">
        <id>Q9NZG7</id>
        <label>NINJ2</label>
    </interactant>
    <organismsDiffer>false</organismsDiffer>
    <experiments>3</experiments>
</comment>
<comment type="interaction">
    <interactant intactId="EBI-18397230">
        <id>Q6P5S7</id>
    </interactant>
    <interactant intactId="EBI-10244780">
        <id>Q5QGT7</id>
        <label>RTP2</label>
    </interactant>
    <organismsDiffer>false</organismsDiffer>
    <experiments>3</experiments>
</comment>
<comment type="interaction">
    <interactant intactId="EBI-18397230">
        <id>Q6P5S7</id>
    </interactant>
    <interactant intactId="EBI-8652744">
        <id>Q96IW7</id>
        <label>SEC22A</label>
    </interactant>
    <organismsDiffer>false</organismsDiffer>
    <experiments>3</experiments>
</comment>
<comment type="interaction">
    <interactant intactId="EBI-18397230">
        <id>Q6P5S7</id>
    </interactant>
    <interactant intactId="EBI-2115181">
        <id>O75920</id>
        <label>SERF1B</label>
    </interactant>
    <organismsDiffer>false</organismsDiffer>
    <experiments>3</experiments>
</comment>
<comment type="interaction">
    <interactant intactId="EBI-18397230">
        <id>Q6P5S7</id>
    </interactant>
    <interactant intactId="EBI-749270">
        <id>Q8N6R1</id>
        <label>SERP2</label>
    </interactant>
    <organismsDiffer>false</organismsDiffer>
    <experiments>3</experiments>
</comment>
<comment type="interaction">
    <interactant intactId="EBI-18397230">
        <id>Q6P5S7</id>
    </interactant>
    <interactant intactId="EBI-10226799">
        <id>Q0VAQ4</id>
        <label>SMAGP</label>
    </interactant>
    <organismsDiffer>false</organismsDiffer>
    <experiments>3</experiments>
</comment>
<comment type="interaction">
    <interactant intactId="EBI-18397230">
        <id>Q6P5S7</id>
    </interactant>
    <interactant intactId="EBI-727240">
        <id>Q9UNK0</id>
        <label>STX8</label>
    </interactant>
    <organismsDiffer>false</organismsDiffer>
    <experiments>3</experiments>
</comment>
<comment type="interaction">
    <interactant intactId="EBI-18397230">
        <id>Q6P5S7</id>
    </interactant>
    <interactant intactId="EBI-1047996">
        <id>O14925</id>
        <label>TIMM23</label>
    </interactant>
    <organismsDiffer>false</organismsDiffer>
    <experiments>3</experiments>
</comment>
<comment type="interaction">
    <interactant intactId="EBI-18397230">
        <id>Q6P5S7</id>
    </interactant>
    <interactant intactId="EBI-12274070">
        <id>Q969S6</id>
        <label>TMEM203</label>
    </interactant>
    <organismsDiffer>false</organismsDiffer>
    <experiments>3</experiments>
</comment>
<comment type="interaction">
    <interactant intactId="EBI-18397230">
        <id>Q6P5S7</id>
    </interactant>
    <interactant intactId="EBI-347385">
        <id>Q9H0R3</id>
        <label>TMEM222</label>
    </interactant>
    <organismsDiffer>false</organismsDiffer>
    <experiments>3</experiments>
</comment>
<comment type="interaction">
    <interactant intactId="EBI-18397230">
        <id>Q6P5S7</id>
    </interactant>
    <interactant intactId="EBI-2852148">
        <id>Q9H2L4</id>
        <label>TMEM60</label>
    </interactant>
    <organismsDiffer>false</organismsDiffer>
    <experiments>3</experiments>
</comment>
<comment type="interaction">
    <interactant intactId="EBI-18397230">
        <id>Q6P5S7</id>
    </interactant>
    <interactant intactId="EBI-16746122">
        <id>Q9NSU2-1</id>
        <label>TREX1</label>
    </interactant>
    <organismsDiffer>false</organismsDiffer>
    <experiments>3</experiments>
</comment>
<comment type="interaction">
    <interactant intactId="EBI-18397230">
        <id>Q6P5S7</id>
    </interactant>
    <interactant intactId="EBI-1188298">
        <id>O95292</id>
        <label>VAPB</label>
    </interactant>
    <organismsDiffer>false</organismsDiffer>
    <experiments>3</experiments>
</comment>
<comment type="interaction">
    <interactant intactId="EBI-18397230">
        <id>Q6P5S7</id>
    </interactant>
    <interactant intactId="EBI-723716">
        <id>Q9UEU0</id>
        <label>VTI1B</label>
    </interactant>
    <organismsDiffer>false</organismsDiffer>
    <experiments>3</experiments>
</comment>
<comment type="interaction">
    <interactant intactId="EBI-18397230">
        <id>Q6P5S7</id>
    </interactant>
    <interactant intactId="EBI-2849773">
        <id>Q8IVQ6</id>
        <label>ZDHHC21</label>
    </interactant>
    <organismsDiffer>false</organismsDiffer>
    <experiments>3</experiments>
</comment>
<comment type="subcellular location">
    <subcellularLocation>
        <location evidence="5">Endomembrane system</location>
        <topology evidence="2">Multi-pass membrane protein</topology>
    </subcellularLocation>
    <subcellularLocation>
        <location evidence="1">Cytoplasmic vesicle</location>
        <location evidence="1">Clathrin-coated vesicle membrane</location>
        <topology evidence="2">Multi-pass membrane protein</topology>
    </subcellularLocation>
</comment>
<comment type="alternative products">
    <event type="alternative splicing"/>
    <isoform>
        <id>Q6P5S7-1</id>
        <name>1</name>
        <sequence type="displayed"/>
    </isoform>
    <isoform>
        <id>Q6P5S7-2</id>
        <name>2</name>
        <sequence type="described" ref="VSP_046496"/>
    </isoform>
</comment>
<comment type="tissue specificity">
    <text evidence="3">Widely expressed.</text>
</comment>
<comment type="similarity">
    <text evidence="9">Belongs to the RNase K family.</text>
</comment>
<comment type="caution">
    <text evidence="9">It is uncertain whether Met-1 or Met-40 is the initiator. Orthologous sequences cannot be extended.</text>
</comment>
<comment type="sequence caution" evidence="9">
    <conflict type="erroneous initiation">
        <sequence resource="EMBL-CDS" id="AAH51802"/>
    </conflict>
    <text>Truncated N-terminus.</text>
</comment>
<comment type="sequence caution" evidence="9">
    <conflict type="erroneous initiation">
        <sequence resource="EMBL-CDS" id="AAH62705"/>
    </conflict>
    <text>Truncated N-terminus.</text>
</comment>
<comment type="sequence caution" evidence="9">
    <conflict type="erroneous initiation">
        <sequence resource="EMBL-CDS" id="BAF82619"/>
    </conflict>
    <text>Truncated N-terminus.</text>
</comment>
<comment type="sequence caution" evidence="9">
    <conflict type="erroneous initiation">
        <sequence resource="EMBL-CDS" id="CAN89245"/>
    </conflict>
    <text>Truncated N-terminus.</text>
</comment>
<reference key="1">
    <citation type="journal article" date="2006" name="Nature">
        <title>DNA sequence of human chromosome 17 and analysis of rearrangement in the human lineage.</title>
        <authorList>
            <person name="Zody M.C."/>
            <person name="Garber M."/>
            <person name="Adams D.J."/>
            <person name="Sharpe T."/>
            <person name="Harrow J."/>
            <person name="Lupski J.R."/>
            <person name="Nicholson C."/>
            <person name="Searle S.M."/>
            <person name="Wilming L."/>
            <person name="Young S.K."/>
            <person name="Abouelleil A."/>
            <person name="Allen N.R."/>
            <person name="Bi W."/>
            <person name="Bloom T."/>
            <person name="Borowsky M.L."/>
            <person name="Bugalter B.E."/>
            <person name="Butler J."/>
            <person name="Chang J.L."/>
            <person name="Chen C.-K."/>
            <person name="Cook A."/>
            <person name="Corum B."/>
            <person name="Cuomo C.A."/>
            <person name="de Jong P.J."/>
            <person name="DeCaprio D."/>
            <person name="Dewar K."/>
            <person name="FitzGerald M."/>
            <person name="Gilbert J."/>
            <person name="Gibson R."/>
            <person name="Gnerre S."/>
            <person name="Goldstein S."/>
            <person name="Grafham D.V."/>
            <person name="Grocock R."/>
            <person name="Hafez N."/>
            <person name="Hagopian D.S."/>
            <person name="Hart E."/>
            <person name="Norman C.H."/>
            <person name="Humphray S."/>
            <person name="Jaffe D.B."/>
            <person name="Jones M."/>
            <person name="Kamal M."/>
            <person name="Khodiyar V.K."/>
            <person name="LaButti K."/>
            <person name="Laird G."/>
            <person name="Lehoczky J."/>
            <person name="Liu X."/>
            <person name="Lokyitsang T."/>
            <person name="Loveland J."/>
            <person name="Lui A."/>
            <person name="Macdonald P."/>
            <person name="Major J.E."/>
            <person name="Matthews L."/>
            <person name="Mauceli E."/>
            <person name="McCarroll S.A."/>
            <person name="Mihalev A.H."/>
            <person name="Mudge J."/>
            <person name="Nguyen C."/>
            <person name="Nicol R."/>
            <person name="O'Leary S.B."/>
            <person name="Osoegawa K."/>
            <person name="Schwartz D.C."/>
            <person name="Shaw-Smith C."/>
            <person name="Stankiewicz P."/>
            <person name="Steward C."/>
            <person name="Swarbreck D."/>
            <person name="Venkataraman V."/>
            <person name="Whittaker C.A."/>
            <person name="Yang X."/>
            <person name="Zimmer A.R."/>
            <person name="Bradley A."/>
            <person name="Hubbard T."/>
            <person name="Birren B.W."/>
            <person name="Rogers J."/>
            <person name="Lander E.S."/>
            <person name="Nusbaum C."/>
        </authorList>
    </citation>
    <scope>NUCLEOTIDE SEQUENCE [LARGE SCALE GENOMIC DNA]</scope>
</reference>
<reference key="2">
    <citation type="submission" date="2005-09" db="EMBL/GenBank/DDBJ databases">
        <authorList>
            <person name="Mural R.J."/>
            <person name="Istrail S."/>
            <person name="Sutton G.G."/>
            <person name="Florea L."/>
            <person name="Halpern A.L."/>
            <person name="Mobarry C.M."/>
            <person name="Lippert R."/>
            <person name="Walenz B."/>
            <person name="Shatkay H."/>
            <person name="Dew I."/>
            <person name="Miller J.R."/>
            <person name="Flanigan M.J."/>
            <person name="Edwards N.J."/>
            <person name="Bolanos R."/>
            <person name="Fasulo D."/>
            <person name="Halldorsson B.V."/>
            <person name="Hannenhalli S."/>
            <person name="Turner R."/>
            <person name="Yooseph S."/>
            <person name="Lu F."/>
            <person name="Nusskern D.R."/>
            <person name="Shue B.C."/>
            <person name="Zheng X.H."/>
            <person name="Zhong F."/>
            <person name="Delcher A.L."/>
            <person name="Huson D.H."/>
            <person name="Kravitz S.A."/>
            <person name="Mouchard L."/>
            <person name="Reinert K."/>
            <person name="Remington K.A."/>
            <person name="Clark A.G."/>
            <person name="Waterman M.S."/>
            <person name="Eichler E.E."/>
            <person name="Adams M.D."/>
            <person name="Hunkapiller M.W."/>
            <person name="Myers E.W."/>
            <person name="Venter J.C."/>
        </authorList>
    </citation>
    <scope>NUCLEOTIDE SEQUENCE [LARGE SCALE GENOMIC DNA]</scope>
</reference>
<reference key="3">
    <citation type="journal article" date="2004" name="Nat. Genet.">
        <title>Complete sequencing and characterization of 21,243 full-length human cDNAs.</title>
        <authorList>
            <person name="Ota T."/>
            <person name="Suzuki Y."/>
            <person name="Nishikawa T."/>
            <person name="Otsuki T."/>
            <person name="Sugiyama T."/>
            <person name="Irie R."/>
            <person name="Wakamatsu A."/>
            <person name="Hayashi K."/>
            <person name="Sato H."/>
            <person name="Nagai K."/>
            <person name="Kimura K."/>
            <person name="Makita H."/>
            <person name="Sekine M."/>
            <person name="Obayashi M."/>
            <person name="Nishi T."/>
            <person name="Shibahara T."/>
            <person name="Tanaka T."/>
            <person name="Ishii S."/>
            <person name="Yamamoto J."/>
            <person name="Saito K."/>
            <person name="Kawai Y."/>
            <person name="Isono Y."/>
            <person name="Nakamura Y."/>
            <person name="Nagahari K."/>
            <person name="Murakami K."/>
            <person name="Yasuda T."/>
            <person name="Iwayanagi T."/>
            <person name="Wagatsuma M."/>
            <person name="Shiratori A."/>
            <person name="Sudo H."/>
            <person name="Hosoiri T."/>
            <person name="Kaku Y."/>
            <person name="Kodaira H."/>
            <person name="Kondo H."/>
            <person name="Sugawara M."/>
            <person name="Takahashi M."/>
            <person name="Kanda K."/>
            <person name="Yokoi T."/>
            <person name="Furuya T."/>
            <person name="Kikkawa E."/>
            <person name="Omura Y."/>
            <person name="Abe K."/>
            <person name="Kamihara K."/>
            <person name="Katsuta N."/>
            <person name="Sato K."/>
            <person name="Tanikawa M."/>
            <person name="Yamazaki M."/>
            <person name="Ninomiya K."/>
            <person name="Ishibashi T."/>
            <person name="Yamashita H."/>
            <person name="Murakawa K."/>
            <person name="Fujimori K."/>
            <person name="Tanai H."/>
            <person name="Kimata M."/>
            <person name="Watanabe M."/>
            <person name="Hiraoka S."/>
            <person name="Chiba Y."/>
            <person name="Ishida S."/>
            <person name="Ono Y."/>
            <person name="Takiguchi S."/>
            <person name="Watanabe S."/>
            <person name="Yosida M."/>
            <person name="Hotuta T."/>
            <person name="Kusano J."/>
            <person name="Kanehori K."/>
            <person name="Takahashi-Fujii A."/>
            <person name="Hara H."/>
            <person name="Tanase T.-O."/>
            <person name="Nomura Y."/>
            <person name="Togiya S."/>
            <person name="Komai F."/>
            <person name="Hara R."/>
            <person name="Takeuchi K."/>
            <person name="Arita M."/>
            <person name="Imose N."/>
            <person name="Musashino K."/>
            <person name="Yuuki H."/>
            <person name="Oshima A."/>
            <person name="Sasaki N."/>
            <person name="Aotsuka S."/>
            <person name="Yoshikawa Y."/>
            <person name="Matsunawa H."/>
            <person name="Ichihara T."/>
            <person name="Shiohata N."/>
            <person name="Sano S."/>
            <person name="Moriya S."/>
            <person name="Momiyama H."/>
            <person name="Satoh N."/>
            <person name="Takami S."/>
            <person name="Terashima Y."/>
            <person name="Suzuki O."/>
            <person name="Nakagawa S."/>
            <person name="Senoh A."/>
            <person name="Mizoguchi H."/>
            <person name="Goto Y."/>
            <person name="Shimizu F."/>
            <person name="Wakebe H."/>
            <person name="Hishigaki H."/>
            <person name="Watanabe T."/>
            <person name="Sugiyama A."/>
            <person name="Takemoto M."/>
            <person name="Kawakami B."/>
            <person name="Yamazaki M."/>
            <person name="Watanabe K."/>
            <person name="Kumagai A."/>
            <person name="Itakura S."/>
            <person name="Fukuzumi Y."/>
            <person name="Fujimori Y."/>
            <person name="Komiyama M."/>
            <person name="Tashiro H."/>
            <person name="Tanigami A."/>
            <person name="Fujiwara T."/>
            <person name="Ono T."/>
            <person name="Yamada K."/>
            <person name="Fujii Y."/>
            <person name="Ozaki K."/>
            <person name="Hirao M."/>
            <person name="Ohmori Y."/>
            <person name="Kawabata A."/>
            <person name="Hikiji T."/>
            <person name="Kobatake N."/>
            <person name="Inagaki H."/>
            <person name="Ikema Y."/>
            <person name="Okamoto S."/>
            <person name="Okitani R."/>
            <person name="Kawakami T."/>
            <person name="Noguchi S."/>
            <person name="Itoh T."/>
            <person name="Shigeta K."/>
            <person name="Senba T."/>
            <person name="Matsumura K."/>
            <person name="Nakajima Y."/>
            <person name="Mizuno T."/>
            <person name="Morinaga M."/>
            <person name="Sasaki M."/>
            <person name="Togashi T."/>
            <person name="Oyama M."/>
            <person name="Hata H."/>
            <person name="Watanabe M."/>
            <person name="Komatsu T."/>
            <person name="Mizushima-Sugano J."/>
            <person name="Satoh T."/>
            <person name="Shirai Y."/>
            <person name="Takahashi Y."/>
            <person name="Nakagawa K."/>
            <person name="Okumura K."/>
            <person name="Nagase T."/>
            <person name="Nomura N."/>
            <person name="Kikuchi H."/>
            <person name="Masuho Y."/>
            <person name="Yamashita R."/>
            <person name="Nakai K."/>
            <person name="Yada T."/>
            <person name="Nakamura Y."/>
            <person name="Ohara O."/>
            <person name="Isogai T."/>
            <person name="Sugano S."/>
        </authorList>
    </citation>
    <scope>NUCLEOTIDE SEQUENCE [LARGE SCALE MRNA] OF 24-137 (ISOFORM 1)</scope>
    <source>
        <tissue>Hippocampus</tissue>
    </source>
</reference>
<reference key="4">
    <citation type="journal article" date="2004" name="Genome Res.">
        <title>The status, quality, and expansion of the NIH full-length cDNA project: the Mammalian Gene Collection (MGC).</title>
        <authorList>
            <consortium name="The MGC Project Team"/>
        </authorList>
    </citation>
    <scope>NUCLEOTIDE SEQUENCE [LARGE SCALE MRNA] OF 26-137 (ISOFORM 1)</scope>
    <scope>NUCLEOTIDE SEQUENCE [LARGE SCALE MRNA] OF 27-137 (ISOFORM 2)</scope>
    <source>
        <tissue>Adrenal cortex</tissue>
        <tissue>Prostate</tissue>
    </source>
</reference>
<reference key="5">
    <citation type="journal article" date="2007" name="Nucleic Acids Res.">
        <title>Molecular cloning and characterization of the human RNase kappa, an ortholog of Cc RNase.</title>
        <authorList>
            <person name="Economopoulou M.-A."/>
            <person name="Fragoulis E.G."/>
            <person name="Sideris D.C."/>
        </authorList>
    </citation>
    <scope>NUCLEOTIDE SEQUENCE [MRNA] OF 29-137 (ISOFORM 1)</scope>
    <scope>FUNCTION</scope>
    <scope>CATALYTIC ACTIVITY</scope>
    <scope>TISSUE SPECIFICITY</scope>
</reference>
<reference key="6">
    <citation type="journal article" date="2015" name="Cell Rep.">
        <title>RNASEK Is a V-ATPase-Associated Factor Required for Endocytosis and the Replication of Rhinovirus, Influenza A Virus, and Dengue Virus.</title>
        <authorList>
            <person name="Perreira J.M."/>
            <person name="Aker A.M."/>
            <person name="Savidis G."/>
            <person name="Chin C.R."/>
            <person name="McDougall W.M."/>
            <person name="Portmann J.M."/>
            <person name="Meraner P."/>
            <person name="Smith M.C."/>
            <person name="Rahman M."/>
            <person name="Baker R.E."/>
            <person name="Gauthier A."/>
            <person name="Franti M."/>
            <person name="Brass A.L."/>
        </authorList>
    </citation>
    <scope>FUNCTION</scope>
    <scope>FUNCTION (MICROBIAL INFECTION)</scope>
    <scope>INTERACTION WITH ATP6AP1</scope>
    <scope>SUBCELLULAR LOCATION</scope>
</reference>
<reference key="7">
    <citation type="journal article" date="2015" name="Proc. Natl. Acad. Sci. U.S.A.">
        <title>RNASEK is required for internalization of diverse acid-dependent viruses.</title>
        <authorList>
            <person name="Hackett B.A."/>
            <person name="Yasunaga A."/>
            <person name="Panda D."/>
            <person name="Tartell M.A."/>
            <person name="Hopkins K.C."/>
            <person name="Hensley S.E."/>
            <person name="Cherry S."/>
        </authorList>
    </citation>
    <scope>FUNCTION (MICROBIAL INFECTION)</scope>
</reference>
<reference evidence="10 11 12 13" key="8">
    <citation type="journal article" date="2020" name="Mol. Cell">
        <title>Structures of a Complete Human V-ATPase Reveal Mechanisms of Its Assembly.</title>
        <authorList>
            <person name="Wang L."/>
            <person name="Wu D."/>
            <person name="Robinson C.V."/>
            <person name="Wu H."/>
            <person name="Fu T.M."/>
        </authorList>
    </citation>
    <scope>STRUCTURE BY ELECTRON MICROSCOPY (3.00 ANGSTROMS) IN COMPLEX WITH V-ATPASE</scope>
</reference>
<dbReference type="EC" id="3.1.-.-" evidence="3"/>
<dbReference type="EMBL" id="AC040977">
    <property type="status" value="NOT_ANNOTATED_CDS"/>
    <property type="molecule type" value="Genomic_DNA"/>
</dbReference>
<dbReference type="EMBL" id="CH471108">
    <property type="protein sequence ID" value="EAW90275.1"/>
    <property type="molecule type" value="Genomic_DNA"/>
</dbReference>
<dbReference type="EMBL" id="AK289930">
    <property type="protein sequence ID" value="BAF82619.1"/>
    <property type="status" value="ALT_INIT"/>
    <property type="molecule type" value="mRNA"/>
</dbReference>
<dbReference type="EMBL" id="BC051802">
    <property type="protein sequence ID" value="AAH51802.1"/>
    <property type="status" value="ALT_INIT"/>
    <property type="molecule type" value="mRNA"/>
</dbReference>
<dbReference type="EMBL" id="BC062705">
    <property type="protein sequence ID" value="AAH62705.1"/>
    <property type="status" value="ALT_INIT"/>
    <property type="molecule type" value="mRNA"/>
</dbReference>
<dbReference type="EMBL" id="BC095436">
    <property type="protein sequence ID" value="AAH95436.1"/>
    <property type="molecule type" value="mRNA"/>
</dbReference>
<dbReference type="EMBL" id="AM746459">
    <property type="protein sequence ID" value="CAN89245.1"/>
    <property type="status" value="ALT_INIT"/>
    <property type="molecule type" value="mRNA"/>
</dbReference>
<dbReference type="RefSeq" id="NP_001004333.2">
    <property type="nucleotide sequence ID" value="NM_001004333.4"/>
</dbReference>
<dbReference type="PDB" id="6WLW">
    <property type="method" value="EM"/>
    <property type="resolution" value="3.00 A"/>
    <property type="chains" value="T=1-137"/>
</dbReference>
<dbReference type="PDB" id="6WM2">
    <property type="method" value="EM"/>
    <property type="resolution" value="3.10 A"/>
    <property type="chains" value="T=1-137"/>
</dbReference>
<dbReference type="PDB" id="6WM3">
    <property type="method" value="EM"/>
    <property type="resolution" value="3.40 A"/>
    <property type="chains" value="T=1-137"/>
</dbReference>
<dbReference type="PDB" id="6WM4">
    <property type="method" value="EM"/>
    <property type="resolution" value="3.60 A"/>
    <property type="chains" value="T=1-137"/>
</dbReference>
<dbReference type="PDB" id="7U4T">
    <property type="method" value="EM"/>
    <property type="resolution" value="3.60 A"/>
    <property type="chains" value="T=1-137"/>
</dbReference>
<dbReference type="PDB" id="7UNF">
    <property type="method" value="EM"/>
    <property type="resolution" value="4.08 A"/>
    <property type="chains" value="n=1-137"/>
</dbReference>
<dbReference type="PDBsum" id="6WLW"/>
<dbReference type="PDBsum" id="6WM2"/>
<dbReference type="PDBsum" id="6WM3"/>
<dbReference type="PDBsum" id="6WM4"/>
<dbReference type="PDBsum" id="7U4T"/>
<dbReference type="PDBsum" id="7UNF"/>
<dbReference type="EMDB" id="EMD-21844"/>
<dbReference type="EMDB" id="EMD-21847"/>
<dbReference type="EMDB" id="EMD-21848"/>
<dbReference type="EMDB" id="EMD-21849"/>
<dbReference type="EMDB" id="EMD-26334"/>
<dbReference type="EMDB" id="EMD-26623"/>
<dbReference type="SMR" id="Q6P5S7"/>
<dbReference type="BioGRID" id="136544">
    <property type="interactions" value="29"/>
</dbReference>
<dbReference type="ComplexPortal" id="CPX-2470">
    <property type="entry name" value="Vacuolar proton translocating ATPase complex, ATP6V0A1 variant"/>
</dbReference>
<dbReference type="ComplexPortal" id="CPX-6904">
    <property type="entry name" value="Vacuolar proton translocating ATPase complex, ATP6V0A2 variant"/>
</dbReference>
<dbReference type="ComplexPortal" id="CPX-6905">
    <property type="entry name" value="Vacuolar proton translocating ATPase complex, ATP6V0A3 variant"/>
</dbReference>
<dbReference type="ComplexPortal" id="CPX-6912">
    <property type="entry name" value="Vacuolar proton translocating ATPase complex, ATP6V0A4 variant"/>
</dbReference>
<dbReference type="FunCoup" id="Q6P5S7">
    <property type="interactions" value="151"/>
</dbReference>
<dbReference type="IntAct" id="Q6P5S7">
    <property type="interactions" value="27"/>
</dbReference>
<dbReference type="MINT" id="Q6P5S7"/>
<dbReference type="STRING" id="9606.ENSP00000449500"/>
<dbReference type="TCDB" id="3.A.2.2.4">
    <property type="family name" value="the h+- or na+-translocating f-type, v-type and a-type atpase (f-atpase) superfamily"/>
</dbReference>
<dbReference type="iPTMnet" id="Q6P5S7"/>
<dbReference type="PhosphoSitePlus" id="Q6P5S7"/>
<dbReference type="SwissPalm" id="Q6P5S7"/>
<dbReference type="BioMuta" id="RNASEK"/>
<dbReference type="DMDM" id="485956029"/>
<dbReference type="MassIVE" id="Q6P5S7"/>
<dbReference type="PaxDb" id="9606-ENSP00000449500"/>
<dbReference type="PeptideAtlas" id="Q6P5S7"/>
<dbReference type="ProteomicsDB" id="67004">
    <molecule id="Q6P5S7-1"/>
</dbReference>
<dbReference type="Antibodypedia" id="48096">
    <property type="antibodies" value="57 antibodies from 13 providers"/>
</dbReference>
<dbReference type="DNASU" id="440400"/>
<dbReference type="Ensembl" id="ENST00000548577.5">
    <molecule id="Q6P5S7-1"/>
    <property type="protein sequence ID" value="ENSP00000449500.1"/>
    <property type="gene ID" value="ENSG00000219200.12"/>
</dbReference>
<dbReference type="GeneID" id="440400"/>
<dbReference type="KEGG" id="hsa:440400"/>
<dbReference type="UCSC" id="uc002gea.5">
    <molecule id="Q6P5S7-1"/>
    <property type="organism name" value="human"/>
</dbReference>
<dbReference type="AGR" id="HGNC:33911"/>
<dbReference type="CTD" id="440400"/>
<dbReference type="DisGeNET" id="440400"/>
<dbReference type="GeneCards" id="RNASEK"/>
<dbReference type="HGNC" id="HGNC:33911">
    <property type="gene designation" value="RNASEK"/>
</dbReference>
<dbReference type="HPA" id="ENSG00000219200">
    <property type="expression patterns" value="Low tissue specificity"/>
</dbReference>
<dbReference type="neXtProt" id="NX_Q6P5S7"/>
<dbReference type="OpenTargets" id="ENSG00000219200"/>
<dbReference type="PharmGKB" id="PA162401458"/>
<dbReference type="VEuPathDB" id="HostDB:ENSG00000219200"/>
<dbReference type="eggNOG" id="ENOG502S351">
    <property type="taxonomic scope" value="Eukaryota"/>
</dbReference>
<dbReference type="GeneTree" id="ENSGT00390000009664"/>
<dbReference type="InParanoid" id="Q6P5S7"/>
<dbReference type="OrthoDB" id="67317at2759"/>
<dbReference type="PAN-GO" id="Q6P5S7">
    <property type="GO annotations" value="1 GO annotation based on evolutionary models"/>
</dbReference>
<dbReference type="PhylomeDB" id="Q6P5S7"/>
<dbReference type="TreeFam" id="TF300182"/>
<dbReference type="PathwayCommons" id="Q6P5S7"/>
<dbReference type="SignaLink" id="Q6P5S7"/>
<dbReference type="SIGNOR" id="Q6P5S7"/>
<dbReference type="BioGRID-ORCS" id="440400">
    <property type="hits" value="211 hits in 1161 CRISPR screens"/>
</dbReference>
<dbReference type="GenomeRNAi" id="440400"/>
<dbReference type="Pharos" id="Q6P5S7">
    <property type="development level" value="Tbio"/>
</dbReference>
<dbReference type="PRO" id="PR:Q6P5S7"/>
<dbReference type="Proteomes" id="UP000005640">
    <property type="component" value="Chromosome 17"/>
</dbReference>
<dbReference type="RNAct" id="Q6P5S7">
    <property type="molecule type" value="protein"/>
</dbReference>
<dbReference type="Bgee" id="ENSG00000219200">
    <property type="expression patterns" value="Expressed in right adrenal gland cortex and 98 other cell types or tissues"/>
</dbReference>
<dbReference type="ExpressionAtlas" id="Q6P5S7">
    <property type="expression patterns" value="baseline and differential"/>
</dbReference>
<dbReference type="GO" id="GO:0030665">
    <property type="term" value="C:clathrin-coated vesicle membrane"/>
    <property type="evidence" value="ECO:0007669"/>
    <property type="project" value="UniProtKB-SubCell"/>
</dbReference>
<dbReference type="GO" id="GO:0010008">
    <property type="term" value="C:endosome membrane"/>
    <property type="evidence" value="ECO:0000303"/>
    <property type="project" value="ComplexPortal"/>
</dbReference>
<dbReference type="GO" id="GO:0000139">
    <property type="term" value="C:Golgi membrane"/>
    <property type="evidence" value="ECO:0000303"/>
    <property type="project" value="ComplexPortal"/>
</dbReference>
<dbReference type="GO" id="GO:0005765">
    <property type="term" value="C:lysosomal membrane"/>
    <property type="evidence" value="ECO:0000303"/>
    <property type="project" value="ComplexPortal"/>
</dbReference>
<dbReference type="GO" id="GO:0016020">
    <property type="term" value="C:membrane"/>
    <property type="evidence" value="ECO:0000314"/>
    <property type="project" value="ComplexPortal"/>
</dbReference>
<dbReference type="GO" id="GO:0005886">
    <property type="term" value="C:plasma membrane"/>
    <property type="evidence" value="ECO:0000303"/>
    <property type="project" value="ComplexPortal"/>
</dbReference>
<dbReference type="GO" id="GO:0033176">
    <property type="term" value="C:proton-transporting V-type ATPase complex"/>
    <property type="evidence" value="ECO:0000303"/>
    <property type="project" value="ComplexPortal"/>
</dbReference>
<dbReference type="GO" id="GO:0000220">
    <property type="term" value="C:vacuolar proton-transporting V-type ATPase, V0 domain"/>
    <property type="evidence" value="ECO:0000250"/>
    <property type="project" value="UniProtKB"/>
</dbReference>
<dbReference type="GO" id="GO:0004521">
    <property type="term" value="F:RNA endonuclease activity"/>
    <property type="evidence" value="ECO:0000314"/>
    <property type="project" value="UniProtKB"/>
</dbReference>
<dbReference type="GO" id="GO:0048388">
    <property type="term" value="P:endosomal lumen acidification"/>
    <property type="evidence" value="ECO:0000353"/>
    <property type="project" value="UniProtKB"/>
</dbReference>
<dbReference type="GO" id="GO:0061795">
    <property type="term" value="P:Golgi lumen acidification"/>
    <property type="evidence" value="ECO:0000303"/>
    <property type="project" value="ComplexPortal"/>
</dbReference>
<dbReference type="GO" id="GO:0051452">
    <property type="term" value="P:intracellular pH reduction"/>
    <property type="evidence" value="ECO:0000303"/>
    <property type="project" value="ComplexPortal"/>
</dbReference>
<dbReference type="GO" id="GO:0007042">
    <property type="term" value="P:lysosomal lumen acidification"/>
    <property type="evidence" value="ECO:0000303"/>
    <property type="project" value="ComplexPortal"/>
</dbReference>
<dbReference type="GO" id="GO:1902600">
    <property type="term" value="P:proton transmembrane transport"/>
    <property type="evidence" value="ECO:0000353"/>
    <property type="project" value="UniProtKB"/>
</dbReference>
<dbReference type="GO" id="GO:0006898">
    <property type="term" value="P:receptor-mediated endocytosis"/>
    <property type="evidence" value="ECO:0000315"/>
    <property type="project" value="UniProtKB"/>
</dbReference>
<dbReference type="GO" id="GO:0019065">
    <property type="term" value="P:receptor-mediated endocytosis of virus by host cell"/>
    <property type="evidence" value="ECO:0000315"/>
    <property type="project" value="UniProtKB"/>
</dbReference>
<dbReference type="GO" id="GO:0007035">
    <property type="term" value="P:vacuolar acidification"/>
    <property type="evidence" value="ECO:0000303"/>
    <property type="project" value="ComplexPortal"/>
</dbReference>
<dbReference type="InterPro" id="IPR056552">
    <property type="entry name" value="Ribonucl_Kappa"/>
</dbReference>
<dbReference type="InterPro" id="IPR026770">
    <property type="entry name" value="RNase_K"/>
</dbReference>
<dbReference type="PANTHER" id="PTHR31733">
    <property type="entry name" value="RIBONUCLEASE KAPPA"/>
    <property type="match status" value="1"/>
</dbReference>
<dbReference type="Pfam" id="PF23489">
    <property type="entry name" value="V-ATPase_su_f"/>
    <property type="match status" value="1"/>
</dbReference>
<gene>
    <name type="primary">RNASEK</name>
</gene>
<accession>Q6P5S7</accession>
<accession>G3V1Z9</accession>
<accession>Q502Z2</accession>
<proteinExistence type="evidence at protein level"/>